<name>PYRF_VIBCM</name>
<proteinExistence type="inferred from homology"/>
<protein>
    <recommendedName>
        <fullName evidence="1">Orotidine 5'-phosphate decarboxylase</fullName>
        <ecNumber evidence="1">4.1.1.23</ecNumber>
    </recommendedName>
    <alternativeName>
        <fullName evidence="1">OMP decarboxylase</fullName>
        <shortName evidence="1">OMPDCase</shortName>
        <shortName evidence="1">OMPdecase</shortName>
    </alternativeName>
</protein>
<sequence length="231" mass="25003">MNDPKVIVALDYDNLADALAFVDKIDPSTCRLKVGKEMFTLFGPDFVRELHKRGFSVFLDLKFHDIPNTCSKAVKAAAELGVWMVNVHASGGERMMAASREILEPYGKERPLLIGVTVLTSMESADLQGIGILSAPQDHVLRLATLTKNAGLDGVVCSAQEASLLKQHLGREFKLVTPGIRPAGSEQGDQRRIMTPAQAIASGSDYLVIGRPITQAAHPEVVLEEINSSLV</sequence>
<keyword id="KW-0210">Decarboxylase</keyword>
<keyword id="KW-0456">Lyase</keyword>
<keyword id="KW-0665">Pyrimidine biosynthesis</keyword>
<evidence type="ECO:0000255" key="1">
    <source>
        <dbReference type="HAMAP-Rule" id="MF_01200"/>
    </source>
</evidence>
<comment type="function">
    <text evidence="1">Catalyzes the decarboxylation of orotidine 5'-monophosphate (OMP) to uridine 5'-monophosphate (UMP).</text>
</comment>
<comment type="catalytic activity">
    <reaction evidence="1">
        <text>orotidine 5'-phosphate + H(+) = UMP + CO2</text>
        <dbReference type="Rhea" id="RHEA:11596"/>
        <dbReference type="ChEBI" id="CHEBI:15378"/>
        <dbReference type="ChEBI" id="CHEBI:16526"/>
        <dbReference type="ChEBI" id="CHEBI:57538"/>
        <dbReference type="ChEBI" id="CHEBI:57865"/>
        <dbReference type="EC" id="4.1.1.23"/>
    </reaction>
</comment>
<comment type="pathway">
    <text evidence="1">Pyrimidine metabolism; UMP biosynthesis via de novo pathway; UMP from orotate: step 2/2.</text>
</comment>
<comment type="subunit">
    <text evidence="1">Homodimer.</text>
</comment>
<comment type="similarity">
    <text evidence="1">Belongs to the OMP decarboxylase family. Type 1 subfamily.</text>
</comment>
<dbReference type="EC" id="4.1.1.23" evidence="1"/>
<dbReference type="EMBL" id="CP001233">
    <property type="protein sequence ID" value="ACP06141.1"/>
    <property type="molecule type" value="Genomic_DNA"/>
</dbReference>
<dbReference type="RefSeq" id="WP_000999562.1">
    <property type="nucleotide sequence ID" value="NC_012578.1"/>
</dbReference>
<dbReference type="SMR" id="C3LNL5"/>
<dbReference type="KEGG" id="vcm:VCM66_1835"/>
<dbReference type="HOGENOM" id="CLU_067069_0_0_6"/>
<dbReference type="UniPathway" id="UPA00070">
    <property type="reaction ID" value="UER00120"/>
</dbReference>
<dbReference type="Proteomes" id="UP000001217">
    <property type="component" value="Chromosome I"/>
</dbReference>
<dbReference type="GO" id="GO:0005829">
    <property type="term" value="C:cytosol"/>
    <property type="evidence" value="ECO:0007669"/>
    <property type="project" value="TreeGrafter"/>
</dbReference>
<dbReference type="GO" id="GO:0004590">
    <property type="term" value="F:orotidine-5'-phosphate decarboxylase activity"/>
    <property type="evidence" value="ECO:0007669"/>
    <property type="project" value="UniProtKB-UniRule"/>
</dbReference>
<dbReference type="GO" id="GO:0006207">
    <property type="term" value="P:'de novo' pyrimidine nucleobase biosynthetic process"/>
    <property type="evidence" value="ECO:0007669"/>
    <property type="project" value="InterPro"/>
</dbReference>
<dbReference type="GO" id="GO:0044205">
    <property type="term" value="P:'de novo' UMP biosynthetic process"/>
    <property type="evidence" value="ECO:0007669"/>
    <property type="project" value="UniProtKB-UniRule"/>
</dbReference>
<dbReference type="CDD" id="cd04725">
    <property type="entry name" value="OMP_decarboxylase_like"/>
    <property type="match status" value="1"/>
</dbReference>
<dbReference type="FunFam" id="3.20.20.70:FF:000015">
    <property type="entry name" value="Orotidine 5'-phosphate decarboxylase"/>
    <property type="match status" value="1"/>
</dbReference>
<dbReference type="Gene3D" id="3.20.20.70">
    <property type="entry name" value="Aldolase class I"/>
    <property type="match status" value="1"/>
</dbReference>
<dbReference type="HAMAP" id="MF_01200_B">
    <property type="entry name" value="OMPdecase_type1_B"/>
    <property type="match status" value="1"/>
</dbReference>
<dbReference type="InterPro" id="IPR013785">
    <property type="entry name" value="Aldolase_TIM"/>
</dbReference>
<dbReference type="InterPro" id="IPR014732">
    <property type="entry name" value="OMPdecase"/>
</dbReference>
<dbReference type="InterPro" id="IPR018089">
    <property type="entry name" value="OMPdecase_AS"/>
</dbReference>
<dbReference type="InterPro" id="IPR047596">
    <property type="entry name" value="OMPdecase_bac"/>
</dbReference>
<dbReference type="InterPro" id="IPR001754">
    <property type="entry name" value="OMPdeCOase_dom"/>
</dbReference>
<dbReference type="InterPro" id="IPR011060">
    <property type="entry name" value="RibuloseP-bd_barrel"/>
</dbReference>
<dbReference type="NCBIfam" id="NF001273">
    <property type="entry name" value="PRK00230.1"/>
    <property type="match status" value="1"/>
</dbReference>
<dbReference type="NCBIfam" id="TIGR01740">
    <property type="entry name" value="pyrF"/>
    <property type="match status" value="1"/>
</dbReference>
<dbReference type="PANTHER" id="PTHR32119">
    <property type="entry name" value="OROTIDINE 5'-PHOSPHATE DECARBOXYLASE"/>
    <property type="match status" value="1"/>
</dbReference>
<dbReference type="PANTHER" id="PTHR32119:SF2">
    <property type="entry name" value="OROTIDINE 5'-PHOSPHATE DECARBOXYLASE"/>
    <property type="match status" value="1"/>
</dbReference>
<dbReference type="Pfam" id="PF00215">
    <property type="entry name" value="OMPdecase"/>
    <property type="match status" value="1"/>
</dbReference>
<dbReference type="SMART" id="SM00934">
    <property type="entry name" value="OMPdecase"/>
    <property type="match status" value="1"/>
</dbReference>
<dbReference type="SUPFAM" id="SSF51366">
    <property type="entry name" value="Ribulose-phoshate binding barrel"/>
    <property type="match status" value="1"/>
</dbReference>
<dbReference type="PROSITE" id="PS00156">
    <property type="entry name" value="OMPDECASE"/>
    <property type="match status" value="1"/>
</dbReference>
<reference key="1">
    <citation type="journal article" date="2008" name="PLoS ONE">
        <title>A recalibrated molecular clock and independent origins for the cholera pandemic clones.</title>
        <authorList>
            <person name="Feng L."/>
            <person name="Reeves P.R."/>
            <person name="Lan R."/>
            <person name="Ren Y."/>
            <person name="Gao C."/>
            <person name="Zhou Z."/>
            <person name="Ren Y."/>
            <person name="Cheng J."/>
            <person name="Wang W."/>
            <person name="Wang J."/>
            <person name="Qian W."/>
            <person name="Li D."/>
            <person name="Wang L."/>
        </authorList>
    </citation>
    <scope>NUCLEOTIDE SEQUENCE [LARGE SCALE GENOMIC DNA]</scope>
    <source>
        <strain>M66-2</strain>
    </source>
</reference>
<accession>C3LNL5</accession>
<organism>
    <name type="scientific">Vibrio cholerae serotype O1 (strain M66-2)</name>
    <dbReference type="NCBI Taxonomy" id="579112"/>
    <lineage>
        <taxon>Bacteria</taxon>
        <taxon>Pseudomonadati</taxon>
        <taxon>Pseudomonadota</taxon>
        <taxon>Gammaproteobacteria</taxon>
        <taxon>Vibrionales</taxon>
        <taxon>Vibrionaceae</taxon>
        <taxon>Vibrio</taxon>
    </lineage>
</organism>
<gene>
    <name evidence="1" type="primary">pyrF</name>
    <name type="ordered locus">VCM66_1835</name>
</gene>
<feature type="chain" id="PRO_1000164586" description="Orotidine 5'-phosphate decarboxylase">
    <location>
        <begin position="1"/>
        <end position="231"/>
    </location>
</feature>
<feature type="active site" description="Proton donor" evidence="1">
    <location>
        <position position="62"/>
    </location>
</feature>
<feature type="binding site" evidence="1">
    <location>
        <position position="11"/>
    </location>
    <ligand>
        <name>substrate</name>
    </ligand>
</feature>
<feature type="binding site" evidence="1">
    <location>
        <position position="33"/>
    </location>
    <ligand>
        <name>substrate</name>
    </ligand>
</feature>
<feature type="binding site" evidence="1">
    <location>
        <begin position="60"/>
        <end position="69"/>
    </location>
    <ligand>
        <name>substrate</name>
    </ligand>
</feature>
<feature type="binding site" evidence="1">
    <location>
        <position position="120"/>
    </location>
    <ligand>
        <name>substrate</name>
    </ligand>
</feature>
<feature type="binding site" evidence="1">
    <location>
        <position position="181"/>
    </location>
    <ligand>
        <name>substrate</name>
    </ligand>
</feature>
<feature type="binding site" evidence="1">
    <location>
        <position position="190"/>
    </location>
    <ligand>
        <name>substrate</name>
    </ligand>
</feature>
<feature type="binding site" evidence="1">
    <location>
        <position position="210"/>
    </location>
    <ligand>
        <name>substrate</name>
    </ligand>
</feature>
<feature type="binding site" evidence="1">
    <location>
        <position position="211"/>
    </location>
    <ligand>
        <name>substrate</name>
    </ligand>
</feature>